<dbReference type="EC" id="5.6.1.7" evidence="1"/>
<dbReference type="EMBL" id="CP000305">
    <property type="protein sequence ID" value="ABG19646.1"/>
    <property type="molecule type" value="Genomic_DNA"/>
</dbReference>
<dbReference type="EMBL" id="ACNQ01000017">
    <property type="protein sequence ID" value="EEO75834.1"/>
    <property type="molecule type" value="Genomic_DNA"/>
</dbReference>
<dbReference type="RefSeq" id="WP_002209128.1">
    <property type="nucleotide sequence ID" value="NZ_ACNQ01000017.1"/>
</dbReference>
<dbReference type="SMR" id="Q1CED4"/>
<dbReference type="GeneID" id="57974257"/>
<dbReference type="KEGG" id="ypn:YPN_3319"/>
<dbReference type="HOGENOM" id="CLU_016503_3_0_6"/>
<dbReference type="Proteomes" id="UP000008936">
    <property type="component" value="Chromosome"/>
</dbReference>
<dbReference type="GO" id="GO:0005737">
    <property type="term" value="C:cytoplasm"/>
    <property type="evidence" value="ECO:0007669"/>
    <property type="project" value="UniProtKB-SubCell"/>
</dbReference>
<dbReference type="GO" id="GO:0005524">
    <property type="term" value="F:ATP binding"/>
    <property type="evidence" value="ECO:0007669"/>
    <property type="project" value="UniProtKB-UniRule"/>
</dbReference>
<dbReference type="GO" id="GO:0140662">
    <property type="term" value="F:ATP-dependent protein folding chaperone"/>
    <property type="evidence" value="ECO:0007669"/>
    <property type="project" value="InterPro"/>
</dbReference>
<dbReference type="GO" id="GO:0016853">
    <property type="term" value="F:isomerase activity"/>
    <property type="evidence" value="ECO:0007669"/>
    <property type="project" value="UniProtKB-KW"/>
</dbReference>
<dbReference type="GO" id="GO:0051082">
    <property type="term" value="F:unfolded protein binding"/>
    <property type="evidence" value="ECO:0007669"/>
    <property type="project" value="UniProtKB-UniRule"/>
</dbReference>
<dbReference type="GO" id="GO:0042026">
    <property type="term" value="P:protein refolding"/>
    <property type="evidence" value="ECO:0007669"/>
    <property type="project" value="UniProtKB-UniRule"/>
</dbReference>
<dbReference type="CDD" id="cd03344">
    <property type="entry name" value="GroEL"/>
    <property type="match status" value="1"/>
</dbReference>
<dbReference type="FunFam" id="1.10.560.10:FF:000001">
    <property type="entry name" value="60 kDa chaperonin"/>
    <property type="match status" value="1"/>
</dbReference>
<dbReference type="FunFam" id="3.50.7.10:FF:000001">
    <property type="entry name" value="60 kDa chaperonin"/>
    <property type="match status" value="1"/>
</dbReference>
<dbReference type="Gene3D" id="3.50.7.10">
    <property type="entry name" value="GroEL"/>
    <property type="match status" value="1"/>
</dbReference>
<dbReference type="Gene3D" id="1.10.560.10">
    <property type="entry name" value="GroEL-like equatorial domain"/>
    <property type="match status" value="1"/>
</dbReference>
<dbReference type="Gene3D" id="3.30.260.10">
    <property type="entry name" value="TCP-1-like chaperonin intermediate domain"/>
    <property type="match status" value="1"/>
</dbReference>
<dbReference type="HAMAP" id="MF_00600">
    <property type="entry name" value="CH60"/>
    <property type="match status" value="1"/>
</dbReference>
<dbReference type="InterPro" id="IPR018370">
    <property type="entry name" value="Chaperonin_Cpn60_CS"/>
</dbReference>
<dbReference type="InterPro" id="IPR001844">
    <property type="entry name" value="Cpn60/GroEL"/>
</dbReference>
<dbReference type="InterPro" id="IPR002423">
    <property type="entry name" value="Cpn60/GroEL/TCP-1"/>
</dbReference>
<dbReference type="InterPro" id="IPR027409">
    <property type="entry name" value="GroEL-like_apical_dom_sf"/>
</dbReference>
<dbReference type="InterPro" id="IPR027413">
    <property type="entry name" value="GROEL-like_equatorial_sf"/>
</dbReference>
<dbReference type="InterPro" id="IPR027410">
    <property type="entry name" value="TCP-1-like_intermed_sf"/>
</dbReference>
<dbReference type="NCBIfam" id="TIGR02348">
    <property type="entry name" value="GroEL"/>
    <property type="match status" value="1"/>
</dbReference>
<dbReference type="NCBIfam" id="NF000592">
    <property type="entry name" value="PRK00013.1"/>
    <property type="match status" value="1"/>
</dbReference>
<dbReference type="NCBIfam" id="NF009487">
    <property type="entry name" value="PRK12849.1"/>
    <property type="match status" value="1"/>
</dbReference>
<dbReference type="NCBIfam" id="NF009488">
    <property type="entry name" value="PRK12850.1"/>
    <property type="match status" value="1"/>
</dbReference>
<dbReference type="NCBIfam" id="NF009489">
    <property type="entry name" value="PRK12851.1"/>
    <property type="match status" value="1"/>
</dbReference>
<dbReference type="PANTHER" id="PTHR45633">
    <property type="entry name" value="60 KDA HEAT SHOCK PROTEIN, MITOCHONDRIAL"/>
    <property type="match status" value="1"/>
</dbReference>
<dbReference type="Pfam" id="PF00118">
    <property type="entry name" value="Cpn60_TCP1"/>
    <property type="match status" value="1"/>
</dbReference>
<dbReference type="PRINTS" id="PR00298">
    <property type="entry name" value="CHAPERONIN60"/>
</dbReference>
<dbReference type="SUPFAM" id="SSF52029">
    <property type="entry name" value="GroEL apical domain-like"/>
    <property type="match status" value="1"/>
</dbReference>
<dbReference type="SUPFAM" id="SSF48592">
    <property type="entry name" value="GroEL equatorial domain-like"/>
    <property type="match status" value="1"/>
</dbReference>
<dbReference type="SUPFAM" id="SSF54849">
    <property type="entry name" value="GroEL-intermediate domain like"/>
    <property type="match status" value="1"/>
</dbReference>
<dbReference type="PROSITE" id="PS00296">
    <property type="entry name" value="CHAPERONINS_CPN60"/>
    <property type="match status" value="1"/>
</dbReference>
<accession>Q1CED4</accession>
<accession>C4GY34</accession>
<reference key="1">
    <citation type="journal article" date="2006" name="J. Bacteriol.">
        <title>Complete genome sequence of Yersinia pestis strains Antiqua and Nepal516: evidence of gene reduction in an emerging pathogen.</title>
        <authorList>
            <person name="Chain P.S.G."/>
            <person name="Hu P."/>
            <person name="Malfatti S.A."/>
            <person name="Radnedge L."/>
            <person name="Larimer F."/>
            <person name="Vergez L.M."/>
            <person name="Worsham P."/>
            <person name="Chu M.C."/>
            <person name="Andersen G.L."/>
        </authorList>
    </citation>
    <scope>NUCLEOTIDE SEQUENCE [LARGE SCALE GENOMIC DNA]</scope>
    <source>
        <strain>Nepal516</strain>
    </source>
</reference>
<reference key="2">
    <citation type="submission" date="2009-04" db="EMBL/GenBank/DDBJ databases">
        <title>Yersinia pestis Nepal516A whole genome shotgun sequencing project.</title>
        <authorList>
            <person name="Plunkett G. III"/>
            <person name="Anderson B.D."/>
            <person name="Baumler D.J."/>
            <person name="Burland V."/>
            <person name="Cabot E.L."/>
            <person name="Glasner J.D."/>
            <person name="Mau B."/>
            <person name="Neeno-Eckwall E."/>
            <person name="Perna N.T."/>
            <person name="Munk A.C."/>
            <person name="Tapia R."/>
            <person name="Green L.D."/>
            <person name="Rogers Y.C."/>
            <person name="Detter J.C."/>
            <person name="Bruce D.C."/>
            <person name="Brettin T.S."/>
        </authorList>
    </citation>
    <scope>NUCLEOTIDE SEQUENCE [LARGE SCALE GENOMIC DNA]</scope>
    <source>
        <strain>Nepal516</strain>
    </source>
</reference>
<keyword id="KW-0067">ATP-binding</keyword>
<keyword id="KW-0143">Chaperone</keyword>
<keyword id="KW-0963">Cytoplasm</keyword>
<keyword id="KW-0413">Isomerase</keyword>
<keyword id="KW-0547">Nucleotide-binding</keyword>
<comment type="function">
    <text evidence="1">Together with its co-chaperonin GroES, plays an essential role in assisting protein folding. The GroEL-GroES system forms a nano-cage that allows encapsulation of the non-native substrate proteins and provides a physical environment optimized to promote and accelerate protein folding.</text>
</comment>
<comment type="catalytic activity">
    <reaction evidence="1">
        <text>ATP + H2O + a folded polypeptide = ADP + phosphate + an unfolded polypeptide.</text>
        <dbReference type="EC" id="5.6.1.7"/>
    </reaction>
</comment>
<comment type="subunit">
    <text evidence="1">Forms a cylinder of 14 subunits composed of two heptameric rings stacked back-to-back. Interacts with the co-chaperonin GroES.</text>
</comment>
<comment type="subcellular location">
    <subcellularLocation>
        <location evidence="1">Cytoplasm</location>
    </subcellularLocation>
</comment>
<comment type="similarity">
    <text evidence="1">Belongs to the chaperonin (HSP60) family.</text>
</comment>
<feature type="chain" id="PRO_0000257023" description="Chaperonin GroEL">
    <location>
        <begin position="1"/>
        <end position="548"/>
    </location>
</feature>
<feature type="binding site" evidence="1">
    <location>
        <begin position="30"/>
        <end position="33"/>
    </location>
    <ligand>
        <name>ATP</name>
        <dbReference type="ChEBI" id="CHEBI:30616"/>
    </ligand>
</feature>
<feature type="binding site" evidence="1">
    <location>
        <position position="51"/>
    </location>
    <ligand>
        <name>ATP</name>
        <dbReference type="ChEBI" id="CHEBI:30616"/>
    </ligand>
</feature>
<feature type="binding site" evidence="1">
    <location>
        <begin position="87"/>
        <end position="91"/>
    </location>
    <ligand>
        <name>ATP</name>
        <dbReference type="ChEBI" id="CHEBI:30616"/>
    </ligand>
</feature>
<feature type="binding site" evidence="1">
    <location>
        <position position="415"/>
    </location>
    <ligand>
        <name>ATP</name>
        <dbReference type="ChEBI" id="CHEBI:30616"/>
    </ligand>
</feature>
<feature type="binding site" evidence="1">
    <location>
        <position position="495"/>
    </location>
    <ligand>
        <name>ATP</name>
        <dbReference type="ChEBI" id="CHEBI:30616"/>
    </ligand>
</feature>
<gene>
    <name evidence="1" type="primary">groEL</name>
    <name evidence="1" type="synonym">groL</name>
    <name type="ordered locus">YPN_3319</name>
    <name type="ORF">YP516_3772</name>
</gene>
<proteinExistence type="inferred from homology"/>
<protein>
    <recommendedName>
        <fullName evidence="1">Chaperonin GroEL</fullName>
        <ecNumber evidence="1">5.6.1.7</ecNumber>
    </recommendedName>
    <alternativeName>
        <fullName evidence="1">60 kDa chaperonin</fullName>
    </alternativeName>
    <alternativeName>
        <fullName evidence="1">Chaperonin-60</fullName>
        <shortName evidence="1">Cpn60</shortName>
    </alternativeName>
</protein>
<name>CH60_YERPN</name>
<organism>
    <name type="scientific">Yersinia pestis bv. Antiqua (strain Nepal516)</name>
    <dbReference type="NCBI Taxonomy" id="377628"/>
    <lineage>
        <taxon>Bacteria</taxon>
        <taxon>Pseudomonadati</taxon>
        <taxon>Pseudomonadota</taxon>
        <taxon>Gammaproteobacteria</taxon>
        <taxon>Enterobacterales</taxon>
        <taxon>Yersiniaceae</taxon>
        <taxon>Yersinia</taxon>
    </lineage>
</organism>
<evidence type="ECO:0000255" key="1">
    <source>
        <dbReference type="HAMAP-Rule" id="MF_00600"/>
    </source>
</evidence>
<sequence length="548" mass="57431">MAAKDVKFGNDARIKMLRGVNILADAVKVTLGPKGRNVVLDKSFGSPTITKDGVSVAREIELEDKFENMGAQMVKEVASKANDAAGDGTTTATVLAQSIITEGLKAVAAGMNPMDLKRGIDKAVIAAVEELKKLSVPCSDSKAIAQVGTISANSDSTVGELIAQAMEKVGKEGVITVEEGSGLQDELDVVEGMQFDRGYLSPYFINKPETGSIELESPFILLADKKISNIREMLPVLEAVAKAGKPLLIIAEDVEGEALATLVVNTMRGIVKVAAVKAPGFGDRRKAMLQDIATLTAGTVISEEIGLELEKTTLEDLGQAKRVVINKDTTIIIDGVGDEAAIQGRVAQIRQQIEDATSDYDKEKLQERVAKLAGGVAVIKVGAATEVEMKEKKARVEDALHATRAAVEEGVVAGGGVALIRAAHAIAGLKGDNEDQNVGIKVALRAMESPLRQIVVNAGEEASVIANKVKAGEGSFGYNAYTEEYGDMIAMGILDPTKVTRSALQYAASIAGLMITTECMVTDLPRDDKGADMGAGGMGGMGGMGGMM</sequence>